<reference key="1">
    <citation type="journal article" date="2001" name="Biochim. Biophys. Acta">
        <title>Sequencing, phylogenetic and transcriptional analysis of the glyoxylate bypass operon (ace) in the halophilic archaeon Haloferax volcanii.</title>
        <authorList>
            <person name="Serrano J.A."/>
            <person name="Bonete M.J."/>
        </authorList>
    </citation>
    <scope>NUCLEOTIDE SEQUENCE [GENOMIC DNA]</scope>
    <scope>PROTEIN SEQUENCE OF 2-11</scope>
    <scope>FUNCTION</scope>
    <scope>SUBUNIT</scope>
    <source>
        <strain>ATCC 29605 / DSM 3757 / JCM 8879 / NBRC 14742 / NCIMB 2012 / VKM B-1768 / DS2</strain>
    </source>
</reference>
<reference key="2">
    <citation type="journal article" date="2010" name="PLoS ONE">
        <title>The complete genome sequence of Haloferax volcanii DS2, a model archaeon.</title>
        <authorList>
            <person name="Hartman A.L."/>
            <person name="Norais C."/>
            <person name="Badger J.H."/>
            <person name="Delmas S."/>
            <person name="Haldenby S."/>
            <person name="Madupu R."/>
            <person name="Robinson J."/>
            <person name="Khouri H."/>
            <person name="Ren Q."/>
            <person name="Lowe T.M."/>
            <person name="Maupin-Furlow J."/>
            <person name="Pohlschroder M."/>
            <person name="Daniels C."/>
            <person name="Pfeiffer F."/>
            <person name="Allers T."/>
            <person name="Eisen J.A."/>
        </authorList>
    </citation>
    <scope>NUCLEOTIDE SEQUENCE [LARGE SCALE GENOMIC DNA]</scope>
    <source>
        <strain>ATCC 29605 / DSM 3757 / JCM 8879 / NBRC 14742 / NCIMB 2012 / VKM B-1768 / DS2</strain>
    </source>
</reference>
<reference key="3">
    <citation type="journal article" date="2014" name="PLoS Genet.">
        <title>Phylogenetically driven sequencing of extremely halophilic archaea reveals strategies for static and dynamic osmo-response.</title>
        <authorList>
            <person name="Becker E.A."/>
            <person name="Seitzer P.M."/>
            <person name="Tritt A."/>
            <person name="Larsen D."/>
            <person name="Krusor M."/>
            <person name="Yao A.I."/>
            <person name="Wu D."/>
            <person name="Madern D."/>
            <person name="Eisen J.A."/>
            <person name="Darling A.E."/>
            <person name="Facciotti M.T."/>
        </authorList>
    </citation>
    <scope>NUCLEOTIDE SEQUENCE [LARGE SCALE GENOMIC DNA]</scope>
    <source>
        <strain>ATCC 29605 / DSM 3757 / JCM 8879 / NBRC 14742 / NCIMB 2012 / VKM B-1768 / DS2</strain>
    </source>
</reference>
<reference key="4">
    <citation type="journal article" date="1998" name="FEBS Lett.">
        <title>Operation of glyoxylate cycle in halophilic archaea: presence of malate synthase and isocitrate lyase in Haloferax volcanii.</title>
        <authorList>
            <person name="Serrano J.A."/>
            <person name="Camacho M."/>
            <person name="Bonete M.J."/>
        </authorList>
    </citation>
    <scope>FUNCTION</scope>
    <scope>CATALYTIC ACTIVITY</scope>
    <scope>BIOPHYSICOCHEMICAL PROPERTIES</scope>
    <scope>SUBUNIT</scope>
    <source>
        <strain>ATCC 29605 / DSM 3757 / JCM 8879 / NBRC 14742 / NCIMB 2012 / VKM B-1768 / DS2</strain>
    </source>
</reference>
<reference key="5">
    <citation type="journal article" date="2011" name="BMC Struct. Biol.">
        <title>Crystal structures of a halophilic archaeal malate synthase from Haloferax volcanii and comparisons with isoforms A and G.</title>
        <authorList>
            <person name="Bracken C.D."/>
            <person name="Neighbor A.M."/>
            <person name="Lamlenn K.K."/>
            <person name="Thomas G.C."/>
            <person name="Schubert H.L."/>
            <person name="Whitby F.G."/>
            <person name="Howard B.R."/>
        </authorList>
    </citation>
    <scope>X-RAY CRYSTALLOGRAPHY (1.95 ANGSTROMS) IN COMPLEX WITH GLYOXYLATE</scope>
    <scope>ACETYL-COA AND MAGNESIUM ION</scope>
    <scope>FUNCTION</scope>
    <scope>ACTIVE SITE</scope>
    <scope>SUBUNIT</scope>
</reference>
<feature type="chain" id="PRO_0000429586" description="Malate synthase">
    <location>
        <begin position="1"/>
        <end position="433"/>
    </location>
</feature>
<feature type="active site" description="Proton acceptor" evidence="2">
    <location>
        <position position="388"/>
    </location>
</feature>
<feature type="binding site" evidence="4">
    <location>
        <begin position="16"/>
        <end position="17"/>
    </location>
    <ligand>
        <name>acetyl-CoA</name>
        <dbReference type="ChEBI" id="CHEBI:57288"/>
    </ligand>
</feature>
<feature type="binding site" evidence="4">
    <location>
        <position position="52"/>
    </location>
    <ligand>
        <name>Mg(2+)</name>
        <dbReference type="ChEBI" id="CHEBI:18420"/>
    </ligand>
</feature>
<feature type="binding site" evidence="4">
    <location>
        <position position="84"/>
    </location>
    <ligand>
        <name>acetyl-CoA</name>
        <dbReference type="ChEBI" id="CHEBI:57288"/>
    </ligand>
</feature>
<feature type="binding site" evidence="4">
    <location>
        <position position="84"/>
    </location>
    <ligand>
        <name>glyoxylate</name>
        <dbReference type="ChEBI" id="CHEBI:36655"/>
    </ligand>
</feature>
<feature type="binding site" evidence="4">
    <location>
        <position position="158"/>
    </location>
    <ligand>
        <name>glyoxylate</name>
        <dbReference type="ChEBI" id="CHEBI:36655"/>
    </ligand>
</feature>
<feature type="binding site" evidence="4">
    <location>
        <position position="158"/>
    </location>
    <ligand>
        <name>Mg(2+)</name>
        <dbReference type="ChEBI" id="CHEBI:18420"/>
    </ligand>
</feature>
<feature type="binding site" evidence="4">
    <location>
        <begin position="191"/>
        <end position="192"/>
    </location>
    <ligand>
        <name>glyoxylate</name>
        <dbReference type="ChEBI" id="CHEBI:36655"/>
    </ligand>
</feature>
<feature type="binding site" evidence="4">
    <location>
        <position position="192"/>
    </location>
    <ligand>
        <name>Mg(2+)</name>
        <dbReference type="ChEBI" id="CHEBI:18420"/>
    </ligand>
</feature>
<feature type="binding site">
    <location>
        <position position="236"/>
    </location>
    <ligand>
        <name>acetyl-CoA</name>
        <dbReference type="ChEBI" id="CHEBI:57288"/>
    </ligand>
</feature>
<feature type="binding site">
    <location>
        <position position="259"/>
    </location>
    <ligand>
        <name>acetyl-CoA</name>
        <dbReference type="ChEBI" id="CHEBI:57288"/>
    </ligand>
</feature>
<feature type="sequence conflict" description="In Ref. 1; CAC48389." evidence="6" ref="1">
    <original>A</original>
    <variation>V</variation>
    <location>
        <position position="326"/>
    </location>
</feature>
<feature type="strand" evidence="8">
    <location>
        <begin position="13"/>
        <end position="19"/>
    </location>
</feature>
<feature type="strand" evidence="7">
    <location>
        <begin position="23"/>
        <end position="25"/>
    </location>
</feature>
<feature type="helix" evidence="8">
    <location>
        <begin position="29"/>
        <end position="36"/>
    </location>
</feature>
<feature type="helix" evidence="8">
    <location>
        <begin position="39"/>
        <end position="41"/>
    </location>
</feature>
<feature type="strand" evidence="8">
    <location>
        <begin position="44"/>
        <end position="51"/>
    </location>
</feature>
<feature type="helix" evidence="8">
    <location>
        <begin position="56"/>
        <end position="58"/>
    </location>
</feature>
<feature type="helix" evidence="8">
    <location>
        <begin position="59"/>
        <end position="73"/>
    </location>
</feature>
<feature type="helix" evidence="8">
    <location>
        <begin position="74"/>
        <end position="76"/>
    </location>
</feature>
<feature type="strand" evidence="8">
    <location>
        <begin position="78"/>
        <end position="81"/>
    </location>
</feature>
<feature type="helix" evidence="8">
    <location>
        <begin position="92"/>
        <end position="105"/>
    </location>
</feature>
<feature type="helix" evidence="8">
    <location>
        <begin position="108"/>
        <end position="110"/>
    </location>
</feature>
<feature type="helix" evidence="8">
    <location>
        <begin position="113"/>
        <end position="115"/>
    </location>
</feature>
<feature type="strand" evidence="8">
    <location>
        <begin position="118"/>
        <end position="121"/>
    </location>
</feature>
<feature type="helix" evidence="8">
    <location>
        <begin position="127"/>
        <end position="143"/>
    </location>
</feature>
<feature type="strand" evidence="8">
    <location>
        <begin position="151"/>
        <end position="157"/>
    </location>
</feature>
<feature type="helix" evidence="8">
    <location>
        <begin position="160"/>
        <end position="165"/>
    </location>
</feature>
<feature type="helix" evidence="8">
    <location>
        <begin position="166"/>
        <end position="168"/>
    </location>
</feature>
<feature type="helix" evidence="8">
    <location>
        <begin position="169"/>
        <end position="174"/>
    </location>
</feature>
<feature type="helix" evidence="8">
    <location>
        <begin position="180"/>
        <end position="182"/>
    </location>
</feature>
<feature type="strand" evidence="8">
    <location>
        <begin position="183"/>
        <end position="188"/>
    </location>
</feature>
<feature type="helix" evidence="8">
    <location>
        <begin position="190"/>
        <end position="197"/>
    </location>
</feature>
<feature type="helix" evidence="8">
    <location>
        <begin position="210"/>
        <end position="223"/>
    </location>
</feature>
<feature type="strand" evidence="8">
    <location>
        <begin position="226"/>
        <end position="229"/>
    </location>
</feature>
<feature type="helix" evidence="8">
    <location>
        <begin position="238"/>
        <end position="249"/>
    </location>
</feature>
<feature type="turn" evidence="8">
    <location>
        <begin position="250"/>
        <end position="252"/>
    </location>
</feature>
<feature type="strand" evidence="8">
    <location>
        <begin position="255"/>
        <end position="258"/>
    </location>
</feature>
<feature type="helix" evidence="8">
    <location>
        <begin position="261"/>
        <end position="269"/>
    </location>
</feature>
<feature type="strand" evidence="9">
    <location>
        <begin position="326"/>
        <end position="328"/>
    </location>
</feature>
<feature type="helix" evidence="8">
    <location>
        <begin position="329"/>
        <end position="334"/>
    </location>
</feature>
<feature type="helix" evidence="8">
    <location>
        <begin position="343"/>
        <end position="358"/>
    </location>
</feature>
<feature type="strand" evidence="8">
    <location>
        <begin position="364"/>
        <end position="369"/>
    </location>
</feature>
<feature type="strand" evidence="8">
    <location>
        <begin position="382"/>
        <end position="387"/>
    </location>
</feature>
<feature type="helix" evidence="8">
    <location>
        <begin position="389"/>
        <end position="395"/>
    </location>
</feature>
<feature type="helix" evidence="8">
    <location>
        <begin position="397"/>
        <end position="408"/>
    </location>
</feature>
<feature type="helix" evidence="8">
    <location>
        <begin position="410"/>
        <end position="412"/>
    </location>
</feature>
<feature type="helix" evidence="8">
    <location>
        <begin position="413"/>
        <end position="420"/>
    </location>
</feature>
<feature type="helix" evidence="8">
    <location>
        <begin position="422"/>
        <end position="428"/>
    </location>
</feature>
<organism>
    <name type="scientific">Haloferax volcanii (strain ATCC 29605 / DSM 3757 / JCM 8879 / NBRC 14742 / NCIMB 2012 / VKM B-1768 / DS2)</name>
    <name type="common">Halobacterium volcanii</name>
    <dbReference type="NCBI Taxonomy" id="309800"/>
    <lineage>
        <taxon>Archaea</taxon>
        <taxon>Methanobacteriati</taxon>
        <taxon>Methanobacteriota</taxon>
        <taxon>Stenosarchaea group</taxon>
        <taxon>Halobacteria</taxon>
        <taxon>Halobacteriales</taxon>
        <taxon>Haloferacaceae</taxon>
        <taxon>Haloferax</taxon>
    </lineage>
</organism>
<dbReference type="EC" id="2.3.3.9"/>
<dbReference type="EMBL" id="AJ250923">
    <property type="protein sequence ID" value="CAC48389.1"/>
    <property type="molecule type" value="Genomic_DNA"/>
</dbReference>
<dbReference type="EMBL" id="CP001956">
    <property type="protein sequence ID" value="ADE04727.1"/>
    <property type="molecule type" value="Genomic_DNA"/>
</dbReference>
<dbReference type="EMBL" id="AOHU01000038">
    <property type="protein sequence ID" value="ELY34497.1"/>
    <property type="molecule type" value="Genomic_DNA"/>
</dbReference>
<dbReference type="RefSeq" id="WP_004041864.1">
    <property type="nucleotide sequence ID" value="NC_013967.1"/>
</dbReference>
<dbReference type="PDB" id="3OYX">
    <property type="method" value="X-ray"/>
    <property type="resolution" value="2.51 A"/>
    <property type="chains" value="A=1-433"/>
</dbReference>
<dbReference type="PDB" id="3OYZ">
    <property type="method" value="X-ray"/>
    <property type="resolution" value="1.95 A"/>
    <property type="chains" value="A=1-433"/>
</dbReference>
<dbReference type="PDB" id="3PUG">
    <property type="method" value="X-ray"/>
    <property type="resolution" value="2.70 A"/>
    <property type="chains" value="A=1-433"/>
</dbReference>
<dbReference type="PDB" id="5TAO">
    <property type="method" value="X-ray"/>
    <property type="resolution" value="2.10 A"/>
    <property type="chains" value="A=1-433"/>
</dbReference>
<dbReference type="PDBsum" id="3OYX"/>
<dbReference type="PDBsum" id="3OYZ"/>
<dbReference type="PDBsum" id="3PUG"/>
<dbReference type="PDBsum" id="5TAO"/>
<dbReference type="SMR" id="D4GTL2"/>
<dbReference type="STRING" id="309800.HVO_1983"/>
<dbReference type="PaxDb" id="309800-C498_05196"/>
<dbReference type="EnsemblBacteria" id="ADE04727">
    <property type="protein sequence ID" value="ADE04727"/>
    <property type="gene ID" value="HVO_1983"/>
</dbReference>
<dbReference type="GeneID" id="8925725"/>
<dbReference type="KEGG" id="hvo:HVO_1983"/>
<dbReference type="PATRIC" id="fig|309800.29.peg.1011"/>
<dbReference type="eggNOG" id="arCOG00760">
    <property type="taxonomic scope" value="Archaea"/>
</dbReference>
<dbReference type="HOGENOM" id="CLU_629476_0_0_2"/>
<dbReference type="OrthoDB" id="9170at2157"/>
<dbReference type="BRENDA" id="2.3.3.9">
    <property type="organism ID" value="2561"/>
</dbReference>
<dbReference type="UniPathway" id="UPA00703">
    <property type="reaction ID" value="UER00720"/>
</dbReference>
<dbReference type="EvolutionaryTrace" id="D4GTL2"/>
<dbReference type="Proteomes" id="UP000008243">
    <property type="component" value="Chromosome"/>
</dbReference>
<dbReference type="Proteomes" id="UP000011532">
    <property type="component" value="Unassembled WGS sequence"/>
</dbReference>
<dbReference type="GO" id="GO:0005737">
    <property type="term" value="C:cytoplasm"/>
    <property type="evidence" value="ECO:0007669"/>
    <property type="project" value="UniProtKB-SubCell"/>
</dbReference>
<dbReference type="GO" id="GO:0000287">
    <property type="term" value="F:magnesium ion binding"/>
    <property type="evidence" value="ECO:0007669"/>
    <property type="project" value="TreeGrafter"/>
</dbReference>
<dbReference type="GO" id="GO:0004474">
    <property type="term" value="F:malate synthase activity"/>
    <property type="evidence" value="ECO:0000314"/>
    <property type="project" value="UniProtKB"/>
</dbReference>
<dbReference type="GO" id="GO:0046872">
    <property type="term" value="F:metal ion binding"/>
    <property type="evidence" value="ECO:0000314"/>
    <property type="project" value="UniProtKB"/>
</dbReference>
<dbReference type="GO" id="GO:0006097">
    <property type="term" value="P:glyoxylate cycle"/>
    <property type="evidence" value="ECO:0000314"/>
    <property type="project" value="UniProtKB"/>
</dbReference>
<dbReference type="GO" id="GO:0006107">
    <property type="term" value="P:oxaloacetate metabolic process"/>
    <property type="evidence" value="ECO:0007669"/>
    <property type="project" value="TreeGrafter"/>
</dbReference>
<dbReference type="GO" id="GO:0006099">
    <property type="term" value="P:tricarboxylic acid cycle"/>
    <property type="evidence" value="ECO:0007669"/>
    <property type="project" value="UniProtKB-KW"/>
</dbReference>
<dbReference type="FunFam" id="3.20.20.60:FF:000100">
    <property type="entry name" value="Malate synthase"/>
    <property type="match status" value="1"/>
</dbReference>
<dbReference type="Gene3D" id="1.20.58.1560">
    <property type="match status" value="1"/>
</dbReference>
<dbReference type="Gene3D" id="3.20.20.60">
    <property type="entry name" value="Phosphoenolpyruvate-binding domains"/>
    <property type="match status" value="1"/>
</dbReference>
<dbReference type="InterPro" id="IPR053484">
    <property type="entry name" value="Malate_Synthase-like_Aldolase"/>
</dbReference>
<dbReference type="InterPro" id="IPR015813">
    <property type="entry name" value="Pyrv/PenolPyrv_kinase-like_dom"/>
</dbReference>
<dbReference type="InterPro" id="IPR040442">
    <property type="entry name" value="Pyrv_kinase-like_dom_sf"/>
</dbReference>
<dbReference type="NCBIfam" id="NF041315">
    <property type="entry name" value="malate_syn_AceB_Halo"/>
    <property type="match status" value="1"/>
</dbReference>
<dbReference type="PANTHER" id="PTHR32308:SF10">
    <property type="entry name" value="CITRATE LYASE SUBUNIT BETA"/>
    <property type="match status" value="1"/>
</dbReference>
<dbReference type="PANTHER" id="PTHR32308">
    <property type="entry name" value="LYASE BETA SUBUNIT, PUTATIVE (AFU_ORTHOLOGUE AFUA_4G13030)-RELATED"/>
    <property type="match status" value="1"/>
</dbReference>
<dbReference type="SUPFAM" id="SSF51621">
    <property type="entry name" value="Phosphoenolpyruvate/pyruvate domain"/>
    <property type="match status" value="1"/>
</dbReference>
<name>ACEB_HALVD</name>
<comment type="function">
    <text evidence="3 4 5">Involved in the glyoxylate cycle which synthesizes precursors for carbohydrates from C2 compounds such as acetate. Catalyzes the Claisen condensation between acetyl-coenzyme A (acetyl-CoA) and glyoxylate to form the malyl-CoA intermediate that is subsequently hydrolyzed to produce malate and CoA.</text>
</comment>
<comment type="catalytic activity">
    <reaction evidence="5">
        <text>glyoxylate + acetyl-CoA + H2O = (S)-malate + CoA + H(+)</text>
        <dbReference type="Rhea" id="RHEA:18181"/>
        <dbReference type="ChEBI" id="CHEBI:15377"/>
        <dbReference type="ChEBI" id="CHEBI:15378"/>
        <dbReference type="ChEBI" id="CHEBI:15589"/>
        <dbReference type="ChEBI" id="CHEBI:36655"/>
        <dbReference type="ChEBI" id="CHEBI:57287"/>
        <dbReference type="ChEBI" id="CHEBI:57288"/>
        <dbReference type="EC" id="2.3.3.9"/>
    </reaction>
</comment>
<comment type="cofactor">
    <cofactor evidence="4">
        <name>Mg(2+)</name>
        <dbReference type="ChEBI" id="CHEBI:18420"/>
    </cofactor>
</comment>
<comment type="biophysicochemical properties">
    <kinetics>
        <KM evidence="5">0.11 uM for glyoxylate (with 0.2 mM acetyl-CoA at pH 8 and 40 degrees Celsius)</KM>
        <KM evidence="5">0.119 uM for acetyl-CoA (with 0.5 mM glyoxylate at pH 8 and 40 degrees Celsius)</KM>
        <text>AceB requires a high salt concentration for activity, the optimum being around 3.0 M KCl. Replacement of KCl by NaCl causes a decrease in activity (about 2-fold).</text>
    </kinetics>
    <phDependence>
        <text evidence="5">Optimum pH is between 8 and 9.</text>
    </phDependence>
    <temperatureDependence>
        <text evidence="5">Optimum temperature is between 45 and 65 degrees Celsius. The activity of the enzyme at 80 degrees Celsius is half of the maximum.</text>
    </temperatureDependence>
</comment>
<comment type="pathway">
    <text>Carbohydrate metabolism; glyoxylate cycle; (S)-malate from isocitrate: step 2/2.</text>
</comment>
<comment type="subunit">
    <text evidence="3 4 5">Homotrimer and homohexamer in equilibrium.</text>
</comment>
<comment type="subcellular location">
    <subcellularLocation>
        <location evidence="1">Cytoplasm</location>
    </subcellularLocation>
</comment>
<comment type="similarity">
    <text evidence="6">Belongs to the HpcH/HpaI aldolase family.</text>
</comment>
<proteinExistence type="evidence at protein level"/>
<protein>
    <recommendedName>
        <fullName>Malate synthase</fullName>
        <shortName>MSH</shortName>
        <ecNumber>2.3.3.9</ecNumber>
    </recommendedName>
</protein>
<gene>
    <name type="primary">aceB</name>
    <name type="synonym">aceB1</name>
    <name type="ordered locus">HVO_1983</name>
    <name type="ORF">C498_05196</name>
</gene>
<keyword id="KW-0002">3D-structure</keyword>
<keyword id="KW-0963">Cytoplasm</keyword>
<keyword id="KW-0903">Direct protein sequencing</keyword>
<keyword id="KW-0329">Glyoxylate bypass</keyword>
<keyword id="KW-0460">Magnesium</keyword>
<keyword id="KW-0479">Metal-binding</keyword>
<keyword id="KW-1185">Reference proteome</keyword>
<keyword id="KW-0808">Transferase</keyword>
<keyword id="KW-0816">Tricarboxylic acid cycle</keyword>
<accession>D4GTL2</accession>
<accession>Q977U4</accession>
<sequence>MTERRHDREFVRTFFTSPTAVEGEDDSAKMLRRAAGLRGMQAPDVWVPDNEDATAPSMRDEGAENIVEVISEQGAEFPGEIHPRMVWHRDSPETRYQGFQHMLDITDPERGAVEHIHGFVIPEVGGIDDWKKADEFFTIVEHEHGLDEGSLAMSVIIESGEAELAMGDLRDEMGKPTNNLERLFLLVDGEVDYTKDMRAMTPTGELPAWPELRHNTSRGASAAGCVAVDGPYDDIRDVEGYRERMTDNQAKGMLGIWSLTPGQVVEANTSPLPPKTGSWLLDADGEEVELASEDGVEAYDGDRLSLEATDGGYELRVGGDARELTADELREELLGLTSYVPSMDDIVDSMEEFEAAKEAGRGAIAMTQSATLRIGGTEIDIEKDRMWDEATYQAAMTPISLFQDVYENRPDQHEELEERYGAGVVERAMEVGL</sequence>
<evidence type="ECO:0000250" key="1"/>
<evidence type="ECO:0000255" key="2"/>
<evidence type="ECO:0000269" key="3">
    <source>
    </source>
</evidence>
<evidence type="ECO:0000269" key="4">
    <source>
    </source>
</evidence>
<evidence type="ECO:0000269" key="5">
    <source>
    </source>
</evidence>
<evidence type="ECO:0000305" key="6"/>
<evidence type="ECO:0007829" key="7">
    <source>
        <dbReference type="PDB" id="3OYX"/>
    </source>
</evidence>
<evidence type="ECO:0007829" key="8">
    <source>
        <dbReference type="PDB" id="3OYZ"/>
    </source>
</evidence>
<evidence type="ECO:0007829" key="9">
    <source>
        <dbReference type="PDB" id="5TAO"/>
    </source>
</evidence>